<feature type="chain" id="PRO_0000412853" description="Putative B3 domain-containing protein At4g12617">
    <location>
        <begin position="1"/>
        <end position="127"/>
    </location>
</feature>
<feature type="DNA-binding region" description="TF-B3">
    <location>
        <begin position="35"/>
        <end position="127"/>
    </location>
</feature>
<gene>
    <name type="ordered locus">At4g12617</name>
    <name type="ORF">T1P17</name>
</gene>
<keyword id="KW-0238">DNA-binding</keyword>
<keyword id="KW-0539">Nucleus</keyword>
<keyword id="KW-1185">Reference proteome</keyword>
<keyword id="KW-0804">Transcription</keyword>
<keyword id="KW-0805">Transcription regulation</keyword>
<reference key="1">
    <citation type="journal article" date="1999" name="Nature">
        <title>Sequence and analysis of chromosome 4 of the plant Arabidopsis thaliana.</title>
        <authorList>
            <person name="Mayer K.F.X."/>
            <person name="Schueller C."/>
            <person name="Wambutt R."/>
            <person name="Murphy G."/>
            <person name="Volckaert G."/>
            <person name="Pohl T."/>
            <person name="Duesterhoeft A."/>
            <person name="Stiekema W."/>
            <person name="Entian K.-D."/>
            <person name="Terryn N."/>
            <person name="Harris B."/>
            <person name="Ansorge W."/>
            <person name="Brandt P."/>
            <person name="Grivell L.A."/>
            <person name="Rieger M."/>
            <person name="Weichselgartner M."/>
            <person name="de Simone V."/>
            <person name="Obermaier B."/>
            <person name="Mache R."/>
            <person name="Mueller M."/>
            <person name="Kreis M."/>
            <person name="Delseny M."/>
            <person name="Puigdomenech P."/>
            <person name="Watson M."/>
            <person name="Schmidtheini T."/>
            <person name="Reichert B."/>
            <person name="Portetelle D."/>
            <person name="Perez-Alonso M."/>
            <person name="Boutry M."/>
            <person name="Bancroft I."/>
            <person name="Vos P."/>
            <person name="Hoheisel J."/>
            <person name="Zimmermann W."/>
            <person name="Wedler H."/>
            <person name="Ridley P."/>
            <person name="Langham S.-A."/>
            <person name="McCullagh B."/>
            <person name="Bilham L."/>
            <person name="Robben J."/>
            <person name="van der Schueren J."/>
            <person name="Grymonprez B."/>
            <person name="Chuang Y.-J."/>
            <person name="Vandenbussche F."/>
            <person name="Braeken M."/>
            <person name="Weltjens I."/>
            <person name="Voet M."/>
            <person name="Bastiaens I."/>
            <person name="Aert R."/>
            <person name="Defoor E."/>
            <person name="Weitzenegger T."/>
            <person name="Bothe G."/>
            <person name="Ramsperger U."/>
            <person name="Hilbert H."/>
            <person name="Braun M."/>
            <person name="Holzer E."/>
            <person name="Brandt A."/>
            <person name="Peters S."/>
            <person name="van Staveren M."/>
            <person name="Dirkse W."/>
            <person name="Mooijman P."/>
            <person name="Klein Lankhorst R."/>
            <person name="Rose M."/>
            <person name="Hauf J."/>
            <person name="Koetter P."/>
            <person name="Berneiser S."/>
            <person name="Hempel S."/>
            <person name="Feldpausch M."/>
            <person name="Lamberth S."/>
            <person name="Van den Daele H."/>
            <person name="De Keyser A."/>
            <person name="Buysshaert C."/>
            <person name="Gielen J."/>
            <person name="Villarroel R."/>
            <person name="De Clercq R."/>
            <person name="van Montagu M."/>
            <person name="Rogers J."/>
            <person name="Cronin A."/>
            <person name="Quail M.A."/>
            <person name="Bray-Allen S."/>
            <person name="Clark L."/>
            <person name="Doggett J."/>
            <person name="Hall S."/>
            <person name="Kay M."/>
            <person name="Lennard N."/>
            <person name="McLay K."/>
            <person name="Mayes R."/>
            <person name="Pettett A."/>
            <person name="Rajandream M.A."/>
            <person name="Lyne M."/>
            <person name="Benes V."/>
            <person name="Rechmann S."/>
            <person name="Borkova D."/>
            <person name="Bloecker H."/>
            <person name="Scharfe M."/>
            <person name="Grimm M."/>
            <person name="Loehnert T.-H."/>
            <person name="Dose S."/>
            <person name="de Haan M."/>
            <person name="Maarse A.C."/>
            <person name="Schaefer M."/>
            <person name="Mueller-Auer S."/>
            <person name="Gabel C."/>
            <person name="Fuchs M."/>
            <person name="Fartmann B."/>
            <person name="Granderath K."/>
            <person name="Dauner D."/>
            <person name="Herzl A."/>
            <person name="Neumann S."/>
            <person name="Argiriou A."/>
            <person name="Vitale D."/>
            <person name="Liguori R."/>
            <person name="Piravandi E."/>
            <person name="Massenet O."/>
            <person name="Quigley F."/>
            <person name="Clabauld G."/>
            <person name="Muendlein A."/>
            <person name="Felber R."/>
            <person name="Schnabl S."/>
            <person name="Hiller R."/>
            <person name="Schmidt W."/>
            <person name="Lecharny A."/>
            <person name="Aubourg S."/>
            <person name="Chefdor F."/>
            <person name="Cooke R."/>
            <person name="Berger C."/>
            <person name="Monfort A."/>
            <person name="Casacuberta E."/>
            <person name="Gibbons T."/>
            <person name="Weber N."/>
            <person name="Vandenbol M."/>
            <person name="Bargues M."/>
            <person name="Terol J."/>
            <person name="Torres A."/>
            <person name="Perez-Perez A."/>
            <person name="Purnelle B."/>
            <person name="Bent E."/>
            <person name="Johnson S."/>
            <person name="Tacon D."/>
            <person name="Jesse T."/>
            <person name="Heijnen L."/>
            <person name="Schwarz S."/>
            <person name="Scholler P."/>
            <person name="Heber S."/>
            <person name="Francs P."/>
            <person name="Bielke C."/>
            <person name="Frishman D."/>
            <person name="Haase D."/>
            <person name="Lemcke K."/>
            <person name="Mewes H.-W."/>
            <person name="Stocker S."/>
            <person name="Zaccaria P."/>
            <person name="Bevan M."/>
            <person name="Wilson R.K."/>
            <person name="de la Bastide M."/>
            <person name="Habermann K."/>
            <person name="Parnell L."/>
            <person name="Dedhia N."/>
            <person name="Gnoj L."/>
            <person name="Schutz K."/>
            <person name="Huang E."/>
            <person name="Spiegel L."/>
            <person name="Sekhon M."/>
            <person name="Murray J."/>
            <person name="Sheet P."/>
            <person name="Cordes M."/>
            <person name="Abu-Threideh J."/>
            <person name="Stoneking T."/>
            <person name="Kalicki J."/>
            <person name="Graves T."/>
            <person name="Harmon G."/>
            <person name="Edwards J."/>
            <person name="Latreille P."/>
            <person name="Courtney L."/>
            <person name="Cloud J."/>
            <person name="Abbott A."/>
            <person name="Scott K."/>
            <person name="Johnson D."/>
            <person name="Minx P."/>
            <person name="Bentley D."/>
            <person name="Fulton B."/>
            <person name="Miller N."/>
            <person name="Greco T."/>
            <person name="Kemp K."/>
            <person name="Kramer J."/>
            <person name="Fulton L."/>
            <person name="Mardis E."/>
            <person name="Dante M."/>
            <person name="Pepin K."/>
            <person name="Hillier L.W."/>
            <person name="Nelson J."/>
            <person name="Spieth J."/>
            <person name="Ryan E."/>
            <person name="Andrews S."/>
            <person name="Geisel C."/>
            <person name="Layman D."/>
            <person name="Du H."/>
            <person name="Ali J."/>
            <person name="Berghoff A."/>
            <person name="Jones K."/>
            <person name="Drone K."/>
            <person name="Cotton M."/>
            <person name="Joshu C."/>
            <person name="Antonoiu B."/>
            <person name="Zidanic M."/>
            <person name="Strong C."/>
            <person name="Sun H."/>
            <person name="Lamar B."/>
            <person name="Yordan C."/>
            <person name="Ma P."/>
            <person name="Zhong J."/>
            <person name="Preston R."/>
            <person name="Vil D."/>
            <person name="Shekher M."/>
            <person name="Matero A."/>
            <person name="Shah R."/>
            <person name="Swaby I.K."/>
            <person name="O'Shaughnessy A."/>
            <person name="Rodriguez M."/>
            <person name="Hoffman J."/>
            <person name="Till S."/>
            <person name="Granat S."/>
            <person name="Shohdy N."/>
            <person name="Hasegawa A."/>
            <person name="Hameed A."/>
            <person name="Lodhi M."/>
            <person name="Johnson A."/>
            <person name="Chen E."/>
            <person name="Marra M.A."/>
            <person name="Martienssen R."/>
            <person name="McCombie W.R."/>
        </authorList>
    </citation>
    <scope>NUCLEOTIDE SEQUENCE [LARGE SCALE GENOMIC DNA]</scope>
    <source>
        <strain>cv. Columbia</strain>
    </source>
</reference>
<reference key="2">
    <citation type="journal article" date="2017" name="Plant J.">
        <title>Araport11: a complete reannotation of the Arabidopsis thaliana reference genome.</title>
        <authorList>
            <person name="Cheng C.Y."/>
            <person name="Krishnakumar V."/>
            <person name="Chan A.P."/>
            <person name="Thibaud-Nissen F."/>
            <person name="Schobel S."/>
            <person name="Town C.D."/>
        </authorList>
    </citation>
    <scope>GENOME REANNOTATION</scope>
    <source>
        <strain>cv. Columbia</strain>
    </source>
</reference>
<reference key="3">
    <citation type="journal article" date="2008" name="Trends Plant Sci.">
        <title>The plant B3 superfamily.</title>
        <authorList>
            <person name="Swaminathan K."/>
            <person name="Peterson K."/>
            <person name="Jack T."/>
        </authorList>
    </citation>
    <scope>GENE FAMILY</scope>
</reference>
<sequence>MAGNRYFEDQPYEVENPFNIMITLSPFDIDLSTTIMMPKTLLEANLFRFMDISYLVGLLQVPNKPKVIELFDIDTKITTFLTIRRDGDNFKFHGWNNILERKHYKAGDVIAFWWDLHHTRLNFKHVA</sequence>
<protein>
    <recommendedName>
        <fullName>Putative B3 domain-containing protein At4g12617</fullName>
    </recommendedName>
</protein>
<proteinExistence type="inferred from homology"/>
<dbReference type="EMBL" id="AL049730">
    <property type="status" value="NOT_ANNOTATED_CDS"/>
    <property type="molecule type" value="Genomic_DNA"/>
</dbReference>
<dbReference type="EMBL" id="AL161534">
    <property type="status" value="NOT_ANNOTATED_CDS"/>
    <property type="molecule type" value="Genomic_DNA"/>
</dbReference>
<dbReference type="EMBL" id="CP002687">
    <property type="protein sequence ID" value="AEE83157.1"/>
    <property type="molecule type" value="Genomic_DNA"/>
</dbReference>
<dbReference type="RefSeq" id="NP_001118972.1">
    <property type="nucleotide sequence ID" value="NM_001125500.1"/>
</dbReference>
<dbReference type="PaxDb" id="3702-AT4G12617.1"/>
<dbReference type="EnsemblPlants" id="AT4G12617.1">
    <property type="protein sequence ID" value="AT4G12617.1"/>
    <property type="gene ID" value="AT4G12617"/>
</dbReference>
<dbReference type="GeneID" id="6240939"/>
<dbReference type="Gramene" id="AT4G12617.1">
    <property type="protein sequence ID" value="AT4G12617.1"/>
    <property type="gene ID" value="AT4G12617"/>
</dbReference>
<dbReference type="KEGG" id="ath:AT4G12617"/>
<dbReference type="Araport" id="AT4G12617"/>
<dbReference type="TAIR" id="AT4G12617"/>
<dbReference type="HOGENOM" id="CLU_1951761_0_0_1"/>
<dbReference type="InParanoid" id="B3H469"/>
<dbReference type="OMA" id="PFNIMIT"/>
<dbReference type="PhylomeDB" id="B3H469"/>
<dbReference type="PRO" id="PR:B3H469"/>
<dbReference type="Proteomes" id="UP000006548">
    <property type="component" value="Chromosome 4"/>
</dbReference>
<dbReference type="ExpressionAtlas" id="B3H469">
    <property type="expression patterns" value="baseline and differential"/>
</dbReference>
<dbReference type="GO" id="GO:0005634">
    <property type="term" value="C:nucleus"/>
    <property type="evidence" value="ECO:0007669"/>
    <property type="project" value="UniProtKB-SubCell"/>
</dbReference>
<dbReference type="GO" id="GO:0003677">
    <property type="term" value="F:DNA binding"/>
    <property type="evidence" value="ECO:0007669"/>
    <property type="project" value="UniProtKB-KW"/>
</dbReference>
<dbReference type="Gene3D" id="2.40.330.10">
    <property type="entry name" value="DNA-binding pseudobarrel domain"/>
    <property type="match status" value="1"/>
</dbReference>
<dbReference type="InterPro" id="IPR051442">
    <property type="entry name" value="B3_domain"/>
</dbReference>
<dbReference type="InterPro" id="IPR015300">
    <property type="entry name" value="DNA-bd_pseudobarrel_sf"/>
</dbReference>
<dbReference type="PANTHER" id="PTHR34269:SF2">
    <property type="entry name" value="BNAC03G29690D PROTEIN"/>
    <property type="match status" value="1"/>
</dbReference>
<dbReference type="PANTHER" id="PTHR34269">
    <property type="entry name" value="TRANSCRIPTION FACTOR B3-DOMAIN FAMILY-RELATED"/>
    <property type="match status" value="1"/>
</dbReference>
<dbReference type="SUPFAM" id="SSF101936">
    <property type="entry name" value="DNA-binding pseudobarrel domain"/>
    <property type="match status" value="1"/>
</dbReference>
<organism>
    <name type="scientific">Arabidopsis thaliana</name>
    <name type="common">Mouse-ear cress</name>
    <dbReference type="NCBI Taxonomy" id="3702"/>
    <lineage>
        <taxon>Eukaryota</taxon>
        <taxon>Viridiplantae</taxon>
        <taxon>Streptophyta</taxon>
        <taxon>Embryophyta</taxon>
        <taxon>Tracheophyta</taxon>
        <taxon>Spermatophyta</taxon>
        <taxon>Magnoliopsida</taxon>
        <taxon>eudicotyledons</taxon>
        <taxon>Gunneridae</taxon>
        <taxon>Pentapetalae</taxon>
        <taxon>rosids</taxon>
        <taxon>malvids</taxon>
        <taxon>Brassicales</taxon>
        <taxon>Brassicaceae</taxon>
        <taxon>Camelineae</taxon>
        <taxon>Arabidopsis</taxon>
    </lineage>
</organism>
<evidence type="ECO:0000250" key="1"/>
<accession>B3H469</accession>
<comment type="subcellular location">
    <subcellularLocation>
        <location evidence="1">Nucleus</location>
    </subcellularLocation>
</comment>
<name>Y4261_ARATH</name>